<reference key="1">
    <citation type="journal article" date="2007" name="Science">
        <title>The Calyptogena magnifica chemoautotrophic symbiont genome.</title>
        <authorList>
            <person name="Newton I.L.G."/>
            <person name="Woyke T."/>
            <person name="Auchtung T.A."/>
            <person name="Dilly G.F."/>
            <person name="Dutton R.J."/>
            <person name="Fisher M.C."/>
            <person name="Fontanez K.M."/>
            <person name="Lau E."/>
            <person name="Stewart F.J."/>
            <person name="Richardson P.M."/>
            <person name="Barry K.W."/>
            <person name="Saunders E."/>
            <person name="Detter J.C."/>
            <person name="Wu D."/>
            <person name="Eisen J.A."/>
            <person name="Cavanaugh C.M."/>
        </authorList>
    </citation>
    <scope>NUCLEOTIDE SEQUENCE [LARGE SCALE GENOMIC DNA]</scope>
</reference>
<protein>
    <recommendedName>
        <fullName evidence="1">Bifunctional protein GlmU</fullName>
    </recommendedName>
    <domain>
        <recommendedName>
            <fullName evidence="1">UDP-N-acetylglucosamine pyrophosphorylase</fullName>
            <ecNumber evidence="1">2.7.7.23</ecNumber>
        </recommendedName>
        <alternativeName>
            <fullName evidence="1">N-acetylglucosamine-1-phosphate uridyltransferase</fullName>
        </alternativeName>
    </domain>
    <domain>
        <recommendedName>
            <fullName evidence="1">Glucosamine-1-phosphate N-acetyltransferase</fullName>
            <ecNumber evidence="1">2.3.1.157</ecNumber>
        </recommendedName>
    </domain>
</protein>
<gene>
    <name evidence="1" type="primary">glmU</name>
    <name type="ordered locus">Rmag_1030</name>
</gene>
<proteinExistence type="inferred from homology"/>
<name>GLMU_RUTMC</name>
<feature type="chain" id="PRO_0000337739" description="Bifunctional protein GlmU">
    <location>
        <begin position="1"/>
        <end position="452"/>
    </location>
</feature>
<feature type="region of interest" description="Pyrophosphorylase" evidence="1">
    <location>
        <begin position="1"/>
        <end position="226"/>
    </location>
</feature>
<feature type="region of interest" description="Linker" evidence="1">
    <location>
        <begin position="227"/>
        <end position="247"/>
    </location>
</feature>
<feature type="region of interest" description="N-acetyltransferase" evidence="1">
    <location>
        <begin position="248"/>
        <end position="452"/>
    </location>
</feature>
<feature type="active site" description="Proton acceptor" evidence="1">
    <location>
        <position position="360"/>
    </location>
</feature>
<feature type="binding site" evidence="1">
    <location>
        <begin position="9"/>
        <end position="12"/>
    </location>
    <ligand>
        <name>UDP-N-acetyl-alpha-D-glucosamine</name>
        <dbReference type="ChEBI" id="CHEBI:57705"/>
    </ligand>
</feature>
<feature type="binding site" evidence="1">
    <location>
        <position position="23"/>
    </location>
    <ligand>
        <name>UDP-N-acetyl-alpha-D-glucosamine</name>
        <dbReference type="ChEBI" id="CHEBI:57705"/>
    </ligand>
</feature>
<feature type="binding site" evidence="1">
    <location>
        <position position="73"/>
    </location>
    <ligand>
        <name>UDP-N-acetyl-alpha-D-glucosamine</name>
        <dbReference type="ChEBI" id="CHEBI:57705"/>
    </ligand>
</feature>
<feature type="binding site" evidence="1">
    <location>
        <begin position="78"/>
        <end position="79"/>
    </location>
    <ligand>
        <name>UDP-N-acetyl-alpha-D-glucosamine</name>
        <dbReference type="ChEBI" id="CHEBI:57705"/>
    </ligand>
</feature>
<feature type="binding site" evidence="1">
    <location>
        <begin position="100"/>
        <end position="102"/>
    </location>
    <ligand>
        <name>UDP-N-acetyl-alpha-D-glucosamine</name>
        <dbReference type="ChEBI" id="CHEBI:57705"/>
    </ligand>
</feature>
<feature type="binding site" evidence="1">
    <location>
        <position position="102"/>
    </location>
    <ligand>
        <name>Mg(2+)</name>
        <dbReference type="ChEBI" id="CHEBI:18420"/>
    </ligand>
</feature>
<feature type="binding site" evidence="1">
    <location>
        <position position="137"/>
    </location>
    <ligand>
        <name>UDP-N-acetyl-alpha-D-glucosamine</name>
        <dbReference type="ChEBI" id="CHEBI:57705"/>
    </ligand>
</feature>
<feature type="binding site" evidence="1">
    <location>
        <position position="151"/>
    </location>
    <ligand>
        <name>UDP-N-acetyl-alpha-D-glucosamine</name>
        <dbReference type="ChEBI" id="CHEBI:57705"/>
    </ligand>
</feature>
<feature type="binding site" evidence="1">
    <location>
        <position position="166"/>
    </location>
    <ligand>
        <name>UDP-N-acetyl-alpha-D-glucosamine</name>
        <dbReference type="ChEBI" id="CHEBI:57705"/>
    </ligand>
</feature>
<feature type="binding site" evidence="1">
    <location>
        <position position="224"/>
    </location>
    <ligand>
        <name>Mg(2+)</name>
        <dbReference type="ChEBI" id="CHEBI:18420"/>
    </ligand>
</feature>
<feature type="binding site" evidence="1">
    <location>
        <position position="224"/>
    </location>
    <ligand>
        <name>UDP-N-acetyl-alpha-D-glucosamine</name>
        <dbReference type="ChEBI" id="CHEBI:57705"/>
    </ligand>
</feature>
<feature type="binding site" evidence="1">
    <location>
        <position position="330"/>
    </location>
    <ligand>
        <name>UDP-N-acetyl-alpha-D-glucosamine</name>
        <dbReference type="ChEBI" id="CHEBI:57705"/>
    </ligand>
</feature>
<feature type="binding site" evidence="1">
    <location>
        <position position="348"/>
    </location>
    <ligand>
        <name>UDP-N-acetyl-alpha-D-glucosamine</name>
        <dbReference type="ChEBI" id="CHEBI:57705"/>
    </ligand>
</feature>
<feature type="binding site" evidence="1">
    <location>
        <position position="363"/>
    </location>
    <ligand>
        <name>UDP-N-acetyl-alpha-D-glucosamine</name>
        <dbReference type="ChEBI" id="CHEBI:57705"/>
    </ligand>
</feature>
<feature type="binding site" evidence="1">
    <location>
        <position position="374"/>
    </location>
    <ligand>
        <name>UDP-N-acetyl-alpha-D-glucosamine</name>
        <dbReference type="ChEBI" id="CHEBI:57705"/>
    </ligand>
</feature>
<feature type="binding site" evidence="1">
    <location>
        <position position="377"/>
    </location>
    <ligand>
        <name>acetyl-CoA</name>
        <dbReference type="ChEBI" id="CHEBI:57288"/>
    </ligand>
</feature>
<feature type="binding site" evidence="1">
    <location>
        <begin position="383"/>
        <end position="384"/>
    </location>
    <ligand>
        <name>acetyl-CoA</name>
        <dbReference type="ChEBI" id="CHEBI:57288"/>
    </ligand>
</feature>
<feature type="binding site" evidence="1">
    <location>
        <position position="402"/>
    </location>
    <ligand>
        <name>acetyl-CoA</name>
        <dbReference type="ChEBI" id="CHEBI:57288"/>
    </ligand>
</feature>
<feature type="binding site" evidence="1">
    <location>
        <position position="420"/>
    </location>
    <ligand>
        <name>acetyl-CoA</name>
        <dbReference type="ChEBI" id="CHEBI:57288"/>
    </ligand>
</feature>
<feature type="binding site" evidence="1">
    <location>
        <position position="437"/>
    </location>
    <ligand>
        <name>acetyl-CoA</name>
        <dbReference type="ChEBI" id="CHEBI:57288"/>
    </ligand>
</feature>
<sequence>MKNIHAIILAAGKGSRMNSSKPKVLQTLSNNTLLGHILSQVKGLCDKVHVVYGFEGNQVQRKINDSNINWVEQTEQLGTGHAVAQAMPHIEDNSISLILYGDVPLIKKSTLADLIHKAQQSGLSLLSVILDNPTGYGRIIRKDKQIQAIVEQKDATNTQLNINEVNTGIMAVHSQLLKQYLSKINSSNAQGELYLTDIIACAITDGQIVSSIISKNKFEIAGVNDKVQLAELERIFQINQATQFMQQGLSLKDPNRFDCRGVFTFGKDCEIDINALIEGEVVLGDNTIIAPNCIIKNSKIGNCISILSNCVIEDCVIEDGATIGPFARIRPNTHIKTYAKIGNFVEVKKSIIGENTNVSHLSYIGDAIIGKNVNISAGVITCNYDGINKHQTIIGDGAFIGSDSQLVAPIKIGKNATIGAGSTITKAAPDNQLSLSRTKQISLKNWQRPTKK</sequence>
<keyword id="KW-0012">Acyltransferase</keyword>
<keyword id="KW-0133">Cell shape</keyword>
<keyword id="KW-0961">Cell wall biogenesis/degradation</keyword>
<keyword id="KW-0963">Cytoplasm</keyword>
<keyword id="KW-0460">Magnesium</keyword>
<keyword id="KW-0479">Metal-binding</keyword>
<keyword id="KW-0511">Multifunctional enzyme</keyword>
<keyword id="KW-0548">Nucleotidyltransferase</keyword>
<keyword id="KW-0573">Peptidoglycan synthesis</keyword>
<keyword id="KW-0677">Repeat</keyword>
<keyword id="KW-0808">Transferase</keyword>
<comment type="function">
    <text evidence="1">Catalyzes the last two sequential reactions in the de novo biosynthetic pathway for UDP-N-acetylglucosamine (UDP-GlcNAc). The C-terminal domain catalyzes the transfer of acetyl group from acetyl coenzyme A to glucosamine-1-phosphate (GlcN-1-P) to produce N-acetylglucosamine-1-phosphate (GlcNAc-1-P), which is converted into UDP-GlcNAc by the transfer of uridine 5-monophosphate (from uridine 5-triphosphate), a reaction catalyzed by the N-terminal domain.</text>
</comment>
<comment type="catalytic activity">
    <reaction evidence="1">
        <text>alpha-D-glucosamine 1-phosphate + acetyl-CoA = N-acetyl-alpha-D-glucosamine 1-phosphate + CoA + H(+)</text>
        <dbReference type="Rhea" id="RHEA:13725"/>
        <dbReference type="ChEBI" id="CHEBI:15378"/>
        <dbReference type="ChEBI" id="CHEBI:57287"/>
        <dbReference type="ChEBI" id="CHEBI:57288"/>
        <dbReference type="ChEBI" id="CHEBI:57776"/>
        <dbReference type="ChEBI" id="CHEBI:58516"/>
        <dbReference type="EC" id="2.3.1.157"/>
    </reaction>
</comment>
<comment type="catalytic activity">
    <reaction evidence="1">
        <text>N-acetyl-alpha-D-glucosamine 1-phosphate + UTP + H(+) = UDP-N-acetyl-alpha-D-glucosamine + diphosphate</text>
        <dbReference type="Rhea" id="RHEA:13509"/>
        <dbReference type="ChEBI" id="CHEBI:15378"/>
        <dbReference type="ChEBI" id="CHEBI:33019"/>
        <dbReference type="ChEBI" id="CHEBI:46398"/>
        <dbReference type="ChEBI" id="CHEBI:57705"/>
        <dbReference type="ChEBI" id="CHEBI:57776"/>
        <dbReference type="EC" id="2.7.7.23"/>
    </reaction>
</comment>
<comment type="cofactor">
    <cofactor evidence="1">
        <name>Mg(2+)</name>
        <dbReference type="ChEBI" id="CHEBI:18420"/>
    </cofactor>
    <text evidence="1">Binds 1 Mg(2+) ion per subunit.</text>
</comment>
<comment type="pathway">
    <text evidence="1">Nucleotide-sugar biosynthesis; UDP-N-acetyl-alpha-D-glucosamine biosynthesis; N-acetyl-alpha-D-glucosamine 1-phosphate from alpha-D-glucosamine 6-phosphate (route II): step 2/2.</text>
</comment>
<comment type="pathway">
    <text evidence="1">Nucleotide-sugar biosynthesis; UDP-N-acetyl-alpha-D-glucosamine biosynthesis; UDP-N-acetyl-alpha-D-glucosamine from N-acetyl-alpha-D-glucosamine 1-phosphate: step 1/1.</text>
</comment>
<comment type="pathway">
    <text evidence="1">Bacterial outer membrane biogenesis; LPS lipid A biosynthesis.</text>
</comment>
<comment type="subunit">
    <text evidence="1">Homotrimer.</text>
</comment>
<comment type="subcellular location">
    <subcellularLocation>
        <location evidence="1">Cytoplasm</location>
    </subcellularLocation>
</comment>
<comment type="similarity">
    <text evidence="1">In the N-terminal section; belongs to the N-acetylglucosamine-1-phosphate uridyltransferase family.</text>
</comment>
<comment type="similarity">
    <text evidence="1">In the C-terminal section; belongs to the transferase hexapeptide repeat family.</text>
</comment>
<accession>A1AXS8</accession>
<dbReference type="EC" id="2.7.7.23" evidence="1"/>
<dbReference type="EC" id="2.3.1.157" evidence="1"/>
<dbReference type="EMBL" id="CP000488">
    <property type="protein sequence ID" value="ABL02735.1"/>
    <property type="molecule type" value="Genomic_DNA"/>
</dbReference>
<dbReference type="RefSeq" id="WP_011738360.1">
    <property type="nucleotide sequence ID" value="NC_008610.1"/>
</dbReference>
<dbReference type="SMR" id="A1AXS8"/>
<dbReference type="STRING" id="413404.Rmag_1030"/>
<dbReference type="KEGG" id="rma:Rmag_1030"/>
<dbReference type="eggNOG" id="COG1207">
    <property type="taxonomic scope" value="Bacteria"/>
</dbReference>
<dbReference type="HOGENOM" id="CLU_029499_15_2_6"/>
<dbReference type="OrthoDB" id="9775031at2"/>
<dbReference type="UniPathway" id="UPA00113">
    <property type="reaction ID" value="UER00532"/>
</dbReference>
<dbReference type="UniPathway" id="UPA00113">
    <property type="reaction ID" value="UER00533"/>
</dbReference>
<dbReference type="UniPathway" id="UPA00973"/>
<dbReference type="Proteomes" id="UP000002587">
    <property type="component" value="Chromosome"/>
</dbReference>
<dbReference type="GO" id="GO:0005737">
    <property type="term" value="C:cytoplasm"/>
    <property type="evidence" value="ECO:0007669"/>
    <property type="project" value="UniProtKB-SubCell"/>
</dbReference>
<dbReference type="GO" id="GO:0016020">
    <property type="term" value="C:membrane"/>
    <property type="evidence" value="ECO:0007669"/>
    <property type="project" value="GOC"/>
</dbReference>
<dbReference type="GO" id="GO:0019134">
    <property type="term" value="F:glucosamine-1-phosphate N-acetyltransferase activity"/>
    <property type="evidence" value="ECO:0007669"/>
    <property type="project" value="UniProtKB-UniRule"/>
</dbReference>
<dbReference type="GO" id="GO:0000287">
    <property type="term" value="F:magnesium ion binding"/>
    <property type="evidence" value="ECO:0007669"/>
    <property type="project" value="UniProtKB-UniRule"/>
</dbReference>
<dbReference type="GO" id="GO:0003977">
    <property type="term" value="F:UDP-N-acetylglucosamine diphosphorylase activity"/>
    <property type="evidence" value="ECO:0007669"/>
    <property type="project" value="UniProtKB-UniRule"/>
</dbReference>
<dbReference type="GO" id="GO:0000902">
    <property type="term" value="P:cell morphogenesis"/>
    <property type="evidence" value="ECO:0007669"/>
    <property type="project" value="UniProtKB-UniRule"/>
</dbReference>
<dbReference type="GO" id="GO:0071555">
    <property type="term" value="P:cell wall organization"/>
    <property type="evidence" value="ECO:0007669"/>
    <property type="project" value="UniProtKB-KW"/>
</dbReference>
<dbReference type="GO" id="GO:0009245">
    <property type="term" value="P:lipid A biosynthetic process"/>
    <property type="evidence" value="ECO:0007669"/>
    <property type="project" value="UniProtKB-UniRule"/>
</dbReference>
<dbReference type="GO" id="GO:0009252">
    <property type="term" value="P:peptidoglycan biosynthetic process"/>
    <property type="evidence" value="ECO:0007669"/>
    <property type="project" value="UniProtKB-UniRule"/>
</dbReference>
<dbReference type="GO" id="GO:0008360">
    <property type="term" value="P:regulation of cell shape"/>
    <property type="evidence" value="ECO:0007669"/>
    <property type="project" value="UniProtKB-KW"/>
</dbReference>
<dbReference type="GO" id="GO:0006048">
    <property type="term" value="P:UDP-N-acetylglucosamine biosynthetic process"/>
    <property type="evidence" value="ECO:0007669"/>
    <property type="project" value="UniProtKB-UniPathway"/>
</dbReference>
<dbReference type="CDD" id="cd02540">
    <property type="entry name" value="GT2_GlmU_N_bac"/>
    <property type="match status" value="1"/>
</dbReference>
<dbReference type="CDD" id="cd03353">
    <property type="entry name" value="LbH_GlmU_C"/>
    <property type="match status" value="1"/>
</dbReference>
<dbReference type="Gene3D" id="2.160.10.10">
    <property type="entry name" value="Hexapeptide repeat proteins"/>
    <property type="match status" value="1"/>
</dbReference>
<dbReference type="Gene3D" id="3.90.550.10">
    <property type="entry name" value="Spore Coat Polysaccharide Biosynthesis Protein SpsA, Chain A"/>
    <property type="match status" value="1"/>
</dbReference>
<dbReference type="HAMAP" id="MF_01631">
    <property type="entry name" value="GlmU"/>
    <property type="match status" value="1"/>
</dbReference>
<dbReference type="InterPro" id="IPR005882">
    <property type="entry name" value="Bifunctional_GlmU"/>
</dbReference>
<dbReference type="InterPro" id="IPR050065">
    <property type="entry name" value="GlmU-like"/>
</dbReference>
<dbReference type="InterPro" id="IPR038009">
    <property type="entry name" value="GlmU_C_LbH"/>
</dbReference>
<dbReference type="InterPro" id="IPR001451">
    <property type="entry name" value="Hexapep"/>
</dbReference>
<dbReference type="InterPro" id="IPR025877">
    <property type="entry name" value="MobA-like_NTP_Trfase"/>
</dbReference>
<dbReference type="InterPro" id="IPR029044">
    <property type="entry name" value="Nucleotide-diphossugar_trans"/>
</dbReference>
<dbReference type="InterPro" id="IPR011004">
    <property type="entry name" value="Trimer_LpxA-like_sf"/>
</dbReference>
<dbReference type="NCBIfam" id="TIGR01173">
    <property type="entry name" value="glmU"/>
    <property type="match status" value="1"/>
</dbReference>
<dbReference type="PANTHER" id="PTHR43584:SF3">
    <property type="entry name" value="BIFUNCTIONAL PROTEIN GLMU"/>
    <property type="match status" value="1"/>
</dbReference>
<dbReference type="PANTHER" id="PTHR43584">
    <property type="entry name" value="NUCLEOTIDYL TRANSFERASE"/>
    <property type="match status" value="1"/>
</dbReference>
<dbReference type="Pfam" id="PF00132">
    <property type="entry name" value="Hexapep"/>
    <property type="match status" value="3"/>
</dbReference>
<dbReference type="Pfam" id="PF12804">
    <property type="entry name" value="NTP_transf_3"/>
    <property type="match status" value="1"/>
</dbReference>
<dbReference type="SUPFAM" id="SSF53448">
    <property type="entry name" value="Nucleotide-diphospho-sugar transferases"/>
    <property type="match status" value="1"/>
</dbReference>
<dbReference type="SUPFAM" id="SSF51161">
    <property type="entry name" value="Trimeric LpxA-like enzymes"/>
    <property type="match status" value="1"/>
</dbReference>
<organism>
    <name type="scientific">Ruthia magnifica subsp. Calyptogena magnifica</name>
    <dbReference type="NCBI Taxonomy" id="413404"/>
    <lineage>
        <taxon>Bacteria</taxon>
        <taxon>Pseudomonadati</taxon>
        <taxon>Pseudomonadota</taxon>
        <taxon>Gammaproteobacteria</taxon>
        <taxon>Candidatus Pseudothioglobaceae</taxon>
        <taxon>Candidatus Ruthturnera</taxon>
    </lineage>
</organism>
<evidence type="ECO:0000255" key="1">
    <source>
        <dbReference type="HAMAP-Rule" id="MF_01631"/>
    </source>
</evidence>